<keyword id="KW-0012">Acyltransferase</keyword>
<keyword id="KW-0443">Lipid metabolism</keyword>
<keyword id="KW-0663">Pyridoxal phosphate</keyword>
<keyword id="KW-0746">Sphingolipid metabolism</keyword>
<keyword id="KW-0808">Transferase</keyword>
<name>SPT_BACO1</name>
<accession>A7LXM2</accession>
<feature type="chain" id="PRO_0000456612" description="Serine palmitoyltransferase">
    <location>
        <begin position="1"/>
        <end position="394"/>
    </location>
</feature>
<feature type="binding site" evidence="2">
    <location>
        <begin position="111"/>
        <end position="112"/>
    </location>
    <ligand>
        <name>pyridoxal 5'-phosphate</name>
        <dbReference type="ChEBI" id="CHEBI:597326"/>
    </ligand>
</feature>
<feature type="binding site" evidence="2">
    <location>
        <position position="183"/>
    </location>
    <ligand>
        <name>pyridoxal 5'-phosphate</name>
        <dbReference type="ChEBI" id="CHEBI:597326"/>
    </ligand>
</feature>
<feature type="binding site" evidence="2">
    <location>
        <position position="211"/>
    </location>
    <ligand>
        <name>pyridoxal 5'-phosphate</name>
        <dbReference type="ChEBI" id="CHEBI:597326"/>
    </ligand>
</feature>
<feature type="binding site" evidence="2">
    <location>
        <position position="239"/>
    </location>
    <ligand>
        <name>pyridoxal 5'-phosphate</name>
        <dbReference type="ChEBI" id="CHEBI:597326"/>
    </ligand>
</feature>
<feature type="modified residue" description="N6-(pyridoxal phosphate)lysine" evidence="2">
    <location>
        <position position="242"/>
    </location>
</feature>
<gene>
    <name evidence="5" type="primary">spt</name>
    <name evidence="7" type="ORF">BACOVA_02588</name>
</gene>
<organism>
    <name type="scientific">Bacteroides ovatus (strain ATCC 8483 / DSM 1896 / JCM 5824 / BCRC 10623 / CCUG 4943 / NCTC 11153)</name>
    <dbReference type="NCBI Taxonomy" id="411476"/>
    <lineage>
        <taxon>Bacteria</taxon>
        <taxon>Pseudomonadati</taxon>
        <taxon>Bacteroidota</taxon>
        <taxon>Bacteroidia</taxon>
        <taxon>Bacteroidales</taxon>
        <taxon>Bacteroidaceae</taxon>
        <taxon>Bacteroides</taxon>
    </lineage>
</organism>
<evidence type="ECO:0000250" key="1">
    <source>
        <dbReference type="UniProtKB" id="A0A0H3C7E9"/>
    </source>
</evidence>
<evidence type="ECO:0000250" key="2">
    <source>
        <dbReference type="UniProtKB" id="P12998"/>
    </source>
</evidence>
<evidence type="ECO:0000250" key="3">
    <source>
        <dbReference type="UniProtKB" id="Q8A9E5"/>
    </source>
</evidence>
<evidence type="ECO:0000269" key="4">
    <source>
    </source>
</evidence>
<evidence type="ECO:0000303" key="5">
    <source>
    </source>
</evidence>
<evidence type="ECO:0000305" key="6"/>
<evidence type="ECO:0000312" key="7">
    <source>
        <dbReference type="EMBL" id="EDO12083.1"/>
    </source>
</evidence>
<reference key="1">
    <citation type="submission" date="2007-03" db="EMBL/GenBank/DDBJ databases">
        <authorList>
            <person name="Fulton L."/>
            <person name="Clifton S."/>
            <person name="Fulton B."/>
            <person name="Xu J."/>
            <person name="Minx P."/>
            <person name="Pepin K.H."/>
            <person name="Johnson M."/>
            <person name="Thiruvilangam P."/>
            <person name="Bhonagiri V."/>
            <person name="Nash W.E."/>
            <person name="Mardis E.R."/>
            <person name="Wilson R.K."/>
        </authorList>
    </citation>
    <scope>NUCLEOTIDE SEQUENCE [LARGE SCALE GENOMIC DNA]</scope>
    <source>
        <strain>ATCC 8483 / DSM 1896 / JCM 5824 / BCRC 10623 / CCUG 4943 / NCTC 11153</strain>
    </source>
</reference>
<reference key="2">
    <citation type="submission" date="2007-04" db="EMBL/GenBank/DDBJ databases">
        <title>Draft genome sequence of Bacteroides ovatus (ATCC 8483).</title>
        <authorList>
            <person name="Sudarsanam P."/>
            <person name="Ley R."/>
            <person name="Guruge J."/>
            <person name="Turnbaugh P.J."/>
            <person name="Mahowald M."/>
            <person name="Liep D."/>
            <person name="Gordon J."/>
        </authorList>
    </citation>
    <scope>NUCLEOTIDE SEQUENCE [LARGE SCALE GENOMIC DNA]</scope>
    <source>
        <strain>ATCC 8483 / DSM 1896 / JCM 5824 / BCRC 10623 / CCUG 4943 / NCTC 11153</strain>
    </source>
</reference>
<reference evidence="6" key="3">
    <citation type="journal article" date="2019" name="Cell Host Microbe">
        <title>Bacteroides-Derived Sphingolipids Are Critical for Maintaining Intestinal Homeostasis and Symbiosis.</title>
        <authorList>
            <person name="Brown E.M."/>
            <person name="Ke X."/>
            <person name="Hitchcock D."/>
            <person name="Jeanfavre S."/>
            <person name="Avila-Pacheco J."/>
            <person name="Nakata T."/>
            <person name="Arthur T.D."/>
            <person name="Fornelos N."/>
            <person name="Heim C."/>
            <person name="Franzosa E.A."/>
            <person name="Watson N."/>
            <person name="Huttenhower C."/>
            <person name="Haiser H.J."/>
            <person name="Dillow G."/>
            <person name="Graham D.B."/>
            <person name="Finlay B.B."/>
            <person name="Kostic A.D."/>
            <person name="Porter J.A."/>
            <person name="Vlamakis H."/>
            <person name="Clish C.B."/>
            <person name="Xavier R.J."/>
        </authorList>
    </citation>
    <scope>FUNCTION</scope>
    <source>
        <strain evidence="5">ATCC 8483 / DSM 1896 / JCM 5824 / BCRC 10623 / CCUG 4943 / NCTC 11153</strain>
    </source>
</reference>
<comment type="function">
    <text evidence="3 4">Involved in de novo bacterial ceramide synthesis (PubMed:31071294). Catalyzes the condensation of L-serine with palmitoyl-CoA (hexadecanoyl-CoA) to produce 3-oxosphinganine (By similarity). Also capable of using alanine as substrate leading to the formation of 1-deoxysphinganine (1-deoxySa) (PubMed:31071294). Contributes to the levels of endogenous sphingolipids in its host (PubMed:31071294).</text>
</comment>
<comment type="catalytic activity">
    <reaction evidence="3">
        <text>L-serine + hexadecanoyl-CoA + H(+) = 3-oxosphinganine + CO2 + CoA</text>
        <dbReference type="Rhea" id="RHEA:14761"/>
        <dbReference type="ChEBI" id="CHEBI:15378"/>
        <dbReference type="ChEBI" id="CHEBI:16526"/>
        <dbReference type="ChEBI" id="CHEBI:33384"/>
        <dbReference type="ChEBI" id="CHEBI:57287"/>
        <dbReference type="ChEBI" id="CHEBI:57379"/>
        <dbReference type="ChEBI" id="CHEBI:58299"/>
        <dbReference type="EC" id="2.3.1.50"/>
    </reaction>
    <physiologicalReaction direction="left-to-right" evidence="3">
        <dbReference type="Rhea" id="RHEA:14762"/>
    </physiologicalReaction>
</comment>
<comment type="cofactor">
    <cofactor evidence="2">
        <name>pyridoxal 5'-phosphate</name>
        <dbReference type="ChEBI" id="CHEBI:597326"/>
    </cofactor>
</comment>
<comment type="pathway">
    <text evidence="6">Lipid metabolism; sphingolipid metabolism.</text>
</comment>
<comment type="miscellaneous">
    <text evidence="1">The bacterial ceramide synthesis pathway operates in a different order from that in eukaryotes. Furthermore, phylogenetic analyses support the hypothesis that the bacterial and eukaryotic ceramide pathways evolved independently.</text>
</comment>
<comment type="similarity">
    <text evidence="6">Belongs to the class-II pyridoxal-phosphate-dependent aminotransferase family.</text>
</comment>
<proteinExistence type="inferred from homology"/>
<sequence>MGLLQEKLAKYDLPQKFMAQGVYPYFREIEGKQGTEVEMGGHEVLMFGSNAYTGLTGDERVIEAGIKAMHKYGSGCAGSRFLNGTLDLHVQLEKELAAFVGKDEALCFSTGFTVNSGVIPALTDRNDYIICDDRDHASIVDGRRLSFSQQLKYKHNDMADLEKQLQKCNPDSVKLIIVDGVFSMEGDLANLPEIVRLKHKYNATIMVDEAHGLGVFGKQGRGVCDHFGLTHEVDLIMGTFSKSLASIGGFIAADSSIINWLRHNARTYIFSASNTPAATASALEALHIIQDEPERLEALWEATNYALKRFREAGFEIGATESPIIPLYVRDTEKTFMVTKLAFDEGVFINPVIPPACAPQDTLVRVALMATHTKDQIDRAVEKLVKAFKALDLL</sequence>
<dbReference type="EC" id="2.3.1.50" evidence="3"/>
<dbReference type="EMBL" id="AAXF02000048">
    <property type="protein sequence ID" value="EDO12083.1"/>
    <property type="molecule type" value="Genomic_DNA"/>
</dbReference>
<dbReference type="RefSeq" id="WP_004295926.1">
    <property type="nucleotide sequence ID" value="NZ_DS264553.1"/>
</dbReference>
<dbReference type="SMR" id="A7LXM2"/>
<dbReference type="GeneID" id="29453558"/>
<dbReference type="eggNOG" id="COG0156">
    <property type="taxonomic scope" value="Bacteria"/>
</dbReference>
<dbReference type="HOGENOM" id="CLU_015846_11_0_10"/>
<dbReference type="UniPathway" id="UPA00222"/>
<dbReference type="Proteomes" id="UP000005475">
    <property type="component" value="Unassembled WGS sequence"/>
</dbReference>
<dbReference type="GO" id="GO:0016020">
    <property type="term" value="C:membrane"/>
    <property type="evidence" value="ECO:0007669"/>
    <property type="project" value="GOC"/>
</dbReference>
<dbReference type="GO" id="GO:0016746">
    <property type="term" value="F:acyltransferase activity"/>
    <property type="evidence" value="ECO:0007669"/>
    <property type="project" value="UniProtKB-KW"/>
</dbReference>
<dbReference type="GO" id="GO:0030170">
    <property type="term" value="F:pyridoxal phosphate binding"/>
    <property type="evidence" value="ECO:0007669"/>
    <property type="project" value="InterPro"/>
</dbReference>
<dbReference type="GO" id="GO:0030148">
    <property type="term" value="P:sphingolipid biosynthetic process"/>
    <property type="evidence" value="ECO:0000315"/>
    <property type="project" value="UniProtKB"/>
</dbReference>
<dbReference type="CDD" id="cd06454">
    <property type="entry name" value="KBL_like"/>
    <property type="match status" value="1"/>
</dbReference>
<dbReference type="FunFam" id="3.40.640.10:FF:000006">
    <property type="entry name" value="5-aminolevulinate synthase, mitochondrial"/>
    <property type="match status" value="1"/>
</dbReference>
<dbReference type="Gene3D" id="3.90.1150.10">
    <property type="entry name" value="Aspartate Aminotransferase, domain 1"/>
    <property type="match status" value="1"/>
</dbReference>
<dbReference type="Gene3D" id="3.40.640.10">
    <property type="entry name" value="Type I PLP-dependent aspartate aminotransferase-like (Major domain)"/>
    <property type="match status" value="1"/>
</dbReference>
<dbReference type="InterPro" id="IPR001917">
    <property type="entry name" value="Aminotrans_II_pyridoxalP_BS"/>
</dbReference>
<dbReference type="InterPro" id="IPR004839">
    <property type="entry name" value="Aminotransferase_I/II_large"/>
</dbReference>
<dbReference type="InterPro" id="IPR050087">
    <property type="entry name" value="AON_synthase_class-II"/>
</dbReference>
<dbReference type="InterPro" id="IPR015424">
    <property type="entry name" value="PyrdxlP-dep_Trfase"/>
</dbReference>
<dbReference type="InterPro" id="IPR015421">
    <property type="entry name" value="PyrdxlP-dep_Trfase_major"/>
</dbReference>
<dbReference type="InterPro" id="IPR015422">
    <property type="entry name" value="PyrdxlP-dep_Trfase_small"/>
</dbReference>
<dbReference type="NCBIfam" id="NF047600">
    <property type="entry name" value="SerpalmtaseCFB"/>
    <property type="match status" value="1"/>
</dbReference>
<dbReference type="PANTHER" id="PTHR13693">
    <property type="entry name" value="CLASS II AMINOTRANSFERASE/8-AMINO-7-OXONONANOATE SYNTHASE"/>
    <property type="match status" value="1"/>
</dbReference>
<dbReference type="PANTHER" id="PTHR13693:SF3">
    <property type="entry name" value="LD36009P"/>
    <property type="match status" value="1"/>
</dbReference>
<dbReference type="Pfam" id="PF00155">
    <property type="entry name" value="Aminotran_1_2"/>
    <property type="match status" value="1"/>
</dbReference>
<dbReference type="SUPFAM" id="SSF53383">
    <property type="entry name" value="PLP-dependent transferases"/>
    <property type="match status" value="1"/>
</dbReference>
<dbReference type="PROSITE" id="PS00599">
    <property type="entry name" value="AA_TRANSFER_CLASS_2"/>
    <property type="match status" value="1"/>
</dbReference>
<protein>
    <recommendedName>
        <fullName evidence="5">Serine palmitoyltransferase</fullName>
        <shortName evidence="5">SPT</shortName>
        <ecNumber evidence="3">2.3.1.50</ecNumber>
    </recommendedName>
</protein>